<sequence>MALLIHLKTVSELRGRGDRIAKVTFRGQSFYSRVLENCEDVADFDETFRWPVASSIDRNEMLEIQVFNYSKVFSNKLIGTFRMVLQKVVEESHVEVTDTLIDDNNAIIKTSLCVEVRYQATDGTVGSWDDGDFLGDESLQEEEKDSQETDGLLPGSRPSSRPPGEKSFRRAGRSVFSAMKLGKNRSHKEEPQRPDEPAVLEMEDLDHLAIRLGDGLDPDSVSLASVTALTTNVSNKRSKPDIKMEPSAGRPMDYQVSITVIEARQLVGLNMDPVVCVEVGDDKKYTSMKESTNCPYYNEYFVFDFHVSPDVMFDKIIKISVIHSKNLLRSGTLVGSFKMDVGTVYSQPEHQFHHKWAILSDPDDISSGLKGYVKCDVAVVGKGDNIKTPHKANETDEDDIEGNLLLPEGVPPERQWARFYVKIYRAEGLPRMNTSLMANVKKAFIGENKDLVDPYVQVFFAGQKGKTSVQKSSYEPLWNEQVVFTDLFPPLCKRMKVQIRDSDKVNDVAIGTHFIDLRKISNDGDKGFLPTLGPAWVNMYGSTRNYTLLDEHQDLNEGLGEGVSFRARLLLGLAVEIVDTSNPELTSSTEVQVEQATPISESCAGKMEEFFLFGAFLEASMIDRRNGDKPITFEVTIGNYGNEVDGLSRPQRPRPRKEPGDEEEVDLIQNASDDEAGDAGDLASVSSTPPMRPQVTDRNYFHLPYLERKPCIYIKSWWPDQRRRLYNANIMDHIADKLEEGLNDIQEMIKTEKSYPERRLRGVLEELSCGCCRFLSLADKDQGHSSRTRLDRERLKSCMRELENMGQQARMLRAQVKRHTVRDKLRLCQNFLQKLRFLADEPQHSIPDIFIWMMSNNKRVAYARVPSKDLLFSIVEEETGKDCAKVKTLFLKLPGKRGFGSAGWTVQAKVELYLWLGLSKQRKEFLCGLPCGFQEVKAAQGLGLHAFPPVSLVYTKKQAFQLRAHMYQARSLFAADSSGLSDPFARVFFINQSQCTEVLNETLCPTWDQMLVFDNLELYGEAHELRDDPPIIVIEIYDQDSMGKADFMGRTFAKPLVKMADEAYCPPRFPPQLEYYQIYRGNATAGDLLAAFELLQIGPAGKADLPPINGPVDVDRGPIMPVPMGIRPVLSKYRVEVLFWGLRDLKRVNLAQVDRPRVDIECAGKGVQSSLIHNYKKNPNFNTLVKWFEVDLPENELLHPPLNIRVVDCRAFGRYTLVGSHAVSSLRRFIYRPPDRSAPSWNTTVRLLRRCRVLCNGGSSSHSTGEVVVTMEPEVPIKKLETMVKLDATSEAVVKVDVAEEEKEKKKKKKGTAEEPEEEEPDESMLDWWSKYFASIDTMKEQLRQQEPSGIDLEEKEEVDNTEGLKGSMKGKEKARAAKEEKKKKTQSSGSGQGSEAPEKKKPKIDELKVYPKELESEFDNFEDWLHTFNLLRGKTGDDEDGSTEEERIVGRFKGSLCVYKVPLPEDVSREAGYDSTYGMFQGIPSNDPINVLVRVYVVRATDLHPADINGKADPYIAIRLGKTDIRDKENYISKQLNPVFGKSFDIEASFPMESMLTVAVYDWDLVGTDDLIGETKIDLENRFYSKHRATCGIAQTYSTHGYNIWRDPMKPSQILTRLCKDGKVDGPHFGPPGRVKVANRVFTGPSEIEDENGQRKPTDEHVALLALRHWEDIPRAGCRLVPEHVETRPLLNPDKPGIEQGRLELWVDMFPMDMPAPGTPLDISPRKPKKYELRVIIWNTDEVVLEDDDFFTGEKSSDIFVRGWLKGQQEDKQDTDVHYHSLTGEGNFNWRYLFPFDYLAAEEKIVISKKESMFSWDETEYKIPARLTLQIWDADHFSADDFLGAIELDLNRFPRGAKTAKQCTMEMATGEVDVPLVSIFKQKRVKGWWPLLARNENDEFELTGKVEAELHLLTAEEAEKNPVGLARNEPDPLEKPNRPDTSFIWFLNPLKSARYFLWHTYRWLLLKLLLLLLLLLLLALFLYSVPGYLVKKILGA</sequence>
<proteinExistence type="evidence at protein level"/>
<keyword id="KW-0025">Alternative splicing</keyword>
<keyword id="KW-0106">Calcium</keyword>
<keyword id="KW-1003">Cell membrane</keyword>
<keyword id="KW-0966">Cell projection</keyword>
<keyword id="KW-0175">Coiled coil</keyword>
<keyword id="KW-0968">Cytoplasmic vesicle</keyword>
<keyword id="KW-0209">Deafness</keyword>
<keyword id="KW-0225">Disease variant</keyword>
<keyword id="KW-0256">Endoplasmic reticulum</keyword>
<keyword id="KW-0333">Golgi apparatus</keyword>
<keyword id="KW-1009">Hearing</keyword>
<keyword id="KW-0472">Membrane</keyword>
<keyword id="KW-0479">Metal-binding</keyword>
<keyword id="KW-0622">Neuropathy</keyword>
<keyword id="KW-1010">Non-syndromic deafness</keyword>
<keyword id="KW-1267">Proteomics identification</keyword>
<keyword id="KW-1185">Reference proteome</keyword>
<keyword id="KW-0677">Repeat</keyword>
<keyword id="KW-0735">Signal-anchor</keyword>
<keyword id="KW-0770">Synapse</keyword>
<keyword id="KW-0812">Transmembrane</keyword>
<keyword id="KW-1133">Transmembrane helix</keyword>
<name>OTOF_HUMAN</name>
<feature type="chain" id="PRO_0000057881" description="Otoferlin">
    <location>
        <begin position="1"/>
        <end position="1997"/>
    </location>
</feature>
<feature type="topological domain" description="Cytoplasmic" evidence="4">
    <location>
        <begin position="1"/>
        <end position="1963"/>
    </location>
</feature>
<feature type="transmembrane region" description="Helical" evidence="4">
    <location>
        <begin position="1964"/>
        <end position="1984"/>
    </location>
</feature>
<feature type="topological domain" description="Extracellular" evidence="4">
    <location>
        <begin position="1985"/>
        <end position="1997"/>
    </location>
</feature>
<feature type="domain" description="C2 1" evidence="5">
    <location>
        <begin position="1"/>
        <end position="98"/>
    </location>
</feature>
<feature type="domain" description="C2 2" evidence="5">
    <location>
        <begin position="236"/>
        <end position="357"/>
    </location>
</feature>
<feature type="domain" description="C2 3" evidence="5">
    <location>
        <begin position="400"/>
        <end position="531"/>
    </location>
</feature>
<feature type="domain" description="C2 4" evidence="5">
    <location>
        <begin position="944"/>
        <end position="1069"/>
    </location>
</feature>
<feature type="domain" description="C2 5" evidence="5">
    <location>
        <begin position="1115"/>
        <end position="1242"/>
    </location>
</feature>
<feature type="domain" description="C2 6" evidence="5">
    <location>
        <begin position="1464"/>
        <end position="1593"/>
    </location>
</feature>
<feature type="domain" description="C2 7" evidence="5">
    <location>
        <begin position="1714"/>
        <end position="1865"/>
    </location>
</feature>
<feature type="region of interest" description="Disordered" evidence="6">
    <location>
        <begin position="128"/>
        <end position="171"/>
    </location>
</feature>
<feature type="region of interest" description="Disordered" evidence="6">
    <location>
        <begin position="642"/>
        <end position="694"/>
    </location>
</feature>
<feature type="region of interest" description="Disordered" evidence="6">
    <location>
        <begin position="1299"/>
        <end position="1324"/>
    </location>
</feature>
<feature type="region of interest" description="Disordered" evidence="6">
    <location>
        <begin position="1343"/>
        <end position="1405"/>
    </location>
</feature>
<feature type="coiled-coil region" evidence="4">
    <location>
        <begin position="792"/>
        <end position="821"/>
    </location>
</feature>
<feature type="compositionally biased region" description="Acidic residues" evidence="6">
    <location>
        <begin position="129"/>
        <end position="145"/>
    </location>
</feature>
<feature type="compositionally biased region" description="Acidic residues" evidence="6">
    <location>
        <begin position="660"/>
        <end position="678"/>
    </location>
</feature>
<feature type="compositionally biased region" description="Acidic residues" evidence="6">
    <location>
        <begin position="1314"/>
        <end position="1324"/>
    </location>
</feature>
<feature type="compositionally biased region" description="Acidic residues" evidence="6">
    <location>
        <begin position="1352"/>
        <end position="1361"/>
    </location>
</feature>
<feature type="compositionally biased region" description="Basic and acidic residues" evidence="6">
    <location>
        <begin position="1370"/>
        <end position="1383"/>
    </location>
</feature>
<feature type="compositionally biased region" description="Low complexity" evidence="6">
    <location>
        <begin position="1387"/>
        <end position="1396"/>
    </location>
</feature>
<feature type="binding site" evidence="5">
    <location>
        <position position="976"/>
    </location>
    <ligand>
        <name>Ca(2+)</name>
        <dbReference type="ChEBI" id="CHEBI:29108"/>
        <label>1</label>
    </ligand>
</feature>
<feature type="binding site" evidence="5">
    <location>
        <position position="976"/>
    </location>
    <ligand>
        <name>Ca(2+)</name>
        <dbReference type="ChEBI" id="CHEBI:29108"/>
        <label>2</label>
    </ligand>
</feature>
<feature type="binding site" evidence="5">
    <location>
        <position position="982"/>
    </location>
    <ligand>
        <name>Ca(2+)</name>
        <dbReference type="ChEBI" id="CHEBI:29108"/>
        <label>1</label>
    </ligand>
</feature>
<feature type="binding site" evidence="5">
    <location>
        <position position="1038"/>
    </location>
    <ligand>
        <name>Ca(2+)</name>
        <dbReference type="ChEBI" id="CHEBI:29108"/>
        <label>1</label>
    </ligand>
</feature>
<feature type="binding site" evidence="5">
    <location>
        <position position="1038"/>
    </location>
    <ligand>
        <name>Ca(2+)</name>
        <dbReference type="ChEBI" id="CHEBI:29108"/>
        <label>2</label>
    </ligand>
</feature>
<feature type="binding site" evidence="5">
    <location>
        <position position="1040"/>
    </location>
    <ligand>
        <name>Ca(2+)</name>
        <dbReference type="ChEBI" id="CHEBI:29108"/>
        <label>1</label>
    </ligand>
</feature>
<feature type="binding site" evidence="5">
    <location>
        <position position="1040"/>
    </location>
    <ligand>
        <name>Ca(2+)</name>
        <dbReference type="ChEBI" id="CHEBI:29108"/>
        <label>2</label>
    </ligand>
</feature>
<feature type="binding site" evidence="5">
    <location>
        <position position="1046"/>
    </location>
    <ligand>
        <name>Ca(2+)</name>
        <dbReference type="ChEBI" id="CHEBI:29108"/>
        <label>2</label>
    </ligand>
</feature>
<feature type="binding site" evidence="5">
    <location>
        <position position="1508"/>
    </location>
    <ligand>
        <name>Ca(2+)</name>
        <dbReference type="ChEBI" id="CHEBI:29108"/>
        <label>3</label>
    </ligand>
</feature>
<feature type="binding site" evidence="5">
    <location>
        <position position="1508"/>
    </location>
    <ligand>
        <name>Ca(2+)</name>
        <dbReference type="ChEBI" id="CHEBI:29108"/>
        <label>4</label>
    </ligand>
</feature>
<feature type="binding site" evidence="5">
    <location>
        <position position="1514"/>
    </location>
    <ligand>
        <name>Ca(2+)</name>
        <dbReference type="ChEBI" id="CHEBI:29108"/>
        <label>3</label>
    </ligand>
</feature>
<feature type="binding site" evidence="5">
    <location>
        <position position="1563"/>
    </location>
    <ligand>
        <name>Ca(2+)</name>
        <dbReference type="ChEBI" id="CHEBI:29108"/>
        <label>3</label>
    </ligand>
</feature>
<feature type="binding site" evidence="5">
    <location>
        <position position="1563"/>
    </location>
    <ligand>
        <name>Ca(2+)</name>
        <dbReference type="ChEBI" id="CHEBI:29108"/>
        <label>4</label>
    </ligand>
</feature>
<feature type="binding site" evidence="5">
    <location>
        <position position="1565"/>
    </location>
    <ligand>
        <name>Ca(2+)</name>
        <dbReference type="ChEBI" id="CHEBI:29108"/>
        <label>3</label>
    </ligand>
</feature>
<feature type="binding site" evidence="5">
    <location>
        <position position="1565"/>
    </location>
    <ligand>
        <name>Ca(2+)</name>
        <dbReference type="ChEBI" id="CHEBI:29108"/>
        <label>4</label>
    </ligand>
</feature>
<feature type="binding site" evidence="5">
    <location>
        <position position="1571"/>
    </location>
    <ligand>
        <name>Ca(2+)</name>
        <dbReference type="ChEBI" id="CHEBI:29108"/>
        <label>4</label>
    </ligand>
</feature>
<feature type="binding site" evidence="5">
    <location>
        <position position="1836"/>
    </location>
    <ligand>
        <name>Ca(2+)</name>
        <dbReference type="ChEBI" id="CHEBI:29108"/>
        <label>5</label>
    </ligand>
</feature>
<feature type="binding site" evidence="5">
    <location>
        <position position="1839"/>
    </location>
    <ligand>
        <name>Ca(2+)</name>
        <dbReference type="ChEBI" id="CHEBI:29108"/>
        <label>5</label>
    </ligand>
</feature>
<feature type="binding site" evidence="5">
    <location>
        <position position="1842"/>
    </location>
    <ligand>
        <name>Ca(2+)</name>
        <dbReference type="ChEBI" id="CHEBI:29108"/>
        <label>5</label>
    </ligand>
</feature>
<feature type="splice variant" id="VSP_001507" description="In isoform 2 and isoform 4." evidence="17 18">
    <location>
        <begin position="1"/>
        <end position="747"/>
    </location>
</feature>
<feature type="splice variant" id="VSP_001509" description="In isoform 3." evidence="18">
    <location>
        <begin position="1"/>
        <end position="690"/>
    </location>
</feature>
<feature type="splice variant" id="VSP_001510" description="In isoform 3." evidence="18">
    <original>MRPQVTDRNYFHLPYLERKPCIYIKSWWPDQRRRLYNANIMDHIADKL</original>
    <variation>MMTDTQDGPSESSQIMRSLTPLINREEAFGEAGEAGLWPSITHTPDSQ</variation>
    <location>
        <begin position="691"/>
        <end position="738"/>
    </location>
</feature>
<feature type="splice variant" id="VSP_001508" description="In isoform 2 and isoform 4." evidence="17 18">
    <location>
        <begin position="1245"/>
        <end position="1264"/>
    </location>
</feature>
<feature type="splice variant" id="VSP_001511" description="In isoform 2 and isoform 5." evidence="18 19">
    <original>SFIWFLNPLKSARYFLWHTYRWLLLKLLLLLLLLLLLALFLYSVPGYLVKKILGA</original>
    <variation>AFVWFLNPLKSIKYLICTRYKWLIIKIVLALLGLLMLGLFLYSLPGYMVKKLLGA</variation>
    <location>
        <begin position="1943"/>
        <end position="1997"/>
    </location>
</feature>
<feature type="sequence variant" id="VAR_032226" description="In dbSNP:rs1879761." evidence="12">
    <original>A</original>
    <variation>V</variation>
    <location>
        <position position="53"/>
    </location>
</feature>
<feature type="sequence variant" id="VAR_032227" description="In dbSNP:rs13031859." evidence="8 12">
    <original>R</original>
    <variation>C</variation>
    <location>
        <position position="82"/>
    </location>
</feature>
<feature type="sequence variant" id="VAR_046003" description="In AUNB1; dbSNP:rs397515611." evidence="14">
    <original>Q</original>
    <variation>H</variation>
    <location>
        <position position="255"/>
    </location>
</feature>
<feature type="sequence variant" id="VAR_032228" description="In DFNB9; dbSNP:rs80356585." evidence="9 12">
    <original>P</original>
    <variation>Q</variation>
    <location>
        <position position="490"/>
    </location>
</feature>
<feature type="sequence variant" id="VAR_032229" description="In DFNB9 and AUNB1; temperature sensitive AUNB1 phenotype with severe hearing loss during febrile illness; dbSNP:rs80356586." evidence="9 12">
    <original>I</original>
    <variation>T</variation>
    <location>
        <position position="515"/>
    </location>
</feature>
<feature type="sequence variant" id="VAR_032230" description="In dbSNP:rs55676840." evidence="12">
    <original>V</original>
    <variation>M</variation>
    <location>
        <position position="575"/>
    </location>
</feature>
<feature type="sequence variant" id="VAR_032231" evidence="8 12">
    <original>R</original>
    <variation>S</variation>
    <location>
        <position position="773"/>
    </location>
</feature>
<feature type="sequence variant" id="VAR_032232" description="In DFNB9; dbSNP:rs80356592." evidence="12">
    <original>R</original>
    <variation>H</variation>
    <location>
        <position position="794"/>
    </location>
</feature>
<feature type="sequence variant" id="VAR_028028" description="In dbSNP:rs2272070.">
    <original>R</original>
    <variation>W</variation>
    <location>
        <position position="818"/>
    </location>
</feature>
<feature type="sequence variant" id="VAR_032233" description="In dbSNP:rs80356570." evidence="11 12 16">
    <original>R</original>
    <variation>W</variation>
    <location>
        <position position="822"/>
    </location>
</feature>
<feature type="sequence variant" id="VAR_046004" description="In AUNB1; dbSNP:rs201329629." evidence="14">
    <original>A</original>
    <variation>E</variation>
    <location>
        <position position="964"/>
    </location>
</feature>
<feature type="sequence variant" id="VAR_032234" description="In AUNB1 and DFNB9; dbSNP:rs80356596." evidence="10 12">
    <original>L</original>
    <variation>P</variation>
    <location>
        <position position="1011"/>
    </location>
</feature>
<feature type="sequence variant" id="VAR_032235" description="In dbSNP:rs80356574." evidence="12">
    <original>A</original>
    <variation>P</variation>
    <location>
        <position position="1083"/>
    </location>
</feature>
<feature type="sequence variant" id="VAR_046005" description="In AUNB1; dbSNP:rs397515599." evidence="14">
    <original>L</original>
    <variation>P</variation>
    <location>
        <position position="1138"/>
    </location>
</feature>
<feature type="sequence variant" id="VAR_032236" description="In DFNB9; dbSNP:rs56054534." evidence="12 15">
    <original>R</original>
    <variation>Q</variation>
    <location>
        <position position="1157"/>
    </location>
</feature>
<feature type="sequence variant" id="VAR_046006" description="In dbSNP:rs368633281." evidence="14">
    <original>R</original>
    <variation>Q</variation>
    <location>
        <position position="1236"/>
    </location>
</feature>
<feature type="sequence variant" id="VAR_032237" description="In dbSNP:rs80356576." evidence="12">
    <original>D</original>
    <variation>E</variation>
    <location>
        <position position="1322"/>
    </location>
</feature>
<feature type="sequence variant" id="VAR_035895" description="In a breast cancer sample; somatic mutation; dbSNP:rs546115388." evidence="13">
    <original>E</original>
    <variation>K</variation>
    <location>
        <position position="1323"/>
    </location>
</feature>
<feature type="sequence variant" id="VAR_035896" description="In a breast cancer sample; somatic mutation; dbSNP:rs1664699580." evidence="13">
    <original>I</original>
    <variation>V</variation>
    <location>
        <position position="1547"/>
    </location>
</feature>
<feature type="sequence variant" id="VAR_032238" description="In dbSNP:rs80356579." evidence="12">
    <original>V</original>
    <variation>M</variation>
    <location>
        <position position="1625"/>
    </location>
</feature>
<feature type="sequence variant" id="VAR_028029" description="In dbSNP:rs17005371." evidence="12">
    <original>P</original>
    <variation>S</variation>
    <location>
        <position position="1646"/>
    </location>
</feature>
<feature type="sequence variant" id="VAR_028030" description="In dbSNP:rs11893228.">
    <original>R</original>
    <variation>H</variation>
    <location>
        <position position="1680"/>
    </location>
</feature>
<feature type="sequence variant" id="VAR_046007" evidence="14">
    <original>T</original>
    <variation>K</variation>
    <location>
        <position position="1688"/>
    </location>
</feature>
<feature type="sequence variant" id="VAR_046008" description="In AUNB1; dbSNP:rs397515606." evidence="14">
    <original>F</original>
    <variation>C</variation>
    <location>
        <position position="1795"/>
    </location>
</feature>
<feature type="sequence variant" id="VAR_032239" description="In DFNB9; dbSNP:rs28937591." evidence="12">
    <original>P</original>
    <variation>A</variation>
    <location>
        <position position="1825"/>
    </location>
</feature>
<feature type="sequence variant" id="VAR_049057" description="In dbSNP:rs45442103.">
    <original>V</original>
    <variation>A</variation>
    <location>
        <position position="1886"/>
    </location>
</feature>
<feature type="sequence variant" id="VAR_032240" description="In dbSNP:rs80356583." evidence="12">
    <original>G</original>
    <variation>D</variation>
    <location>
        <position position="1888"/>
    </location>
</feature>
<feature type="sequence variant" id="VAR_032241" description="In AUNB1; dbSNP:rs80356605." evidence="12">
    <original>R</original>
    <variation>Q</variation>
    <location>
        <position position="1939"/>
    </location>
</feature>
<feature type="sequence variant" id="VAR_032242" description="In AUNB1; dbSNP:rs80356606." evidence="12">
    <original>P</original>
    <variation>R</variation>
    <location>
        <position position="1987"/>
    </location>
</feature>
<feature type="sequence conflict" description="In Ref. 1; AAD26117 and 2; AAG12992/AAG17468." evidence="20" ref="1 2">
    <original>L</original>
    <variation>P</variation>
    <location>
        <position position="1088"/>
    </location>
</feature>
<feature type="sequence conflict" description="In Ref. 5; BAG58982." evidence="20" ref="5">
    <original>G</original>
    <variation>S</variation>
    <location>
        <position position="1787"/>
    </location>
</feature>
<feature type="sequence conflict" description="In Ref. 2; AAG12992." evidence="20" ref="2">
    <original>P</original>
    <variation>L</variation>
    <location sequence="Q9HC10-3">
        <position position="21"/>
    </location>
</feature>
<organism>
    <name type="scientific">Homo sapiens</name>
    <name type="common">Human</name>
    <dbReference type="NCBI Taxonomy" id="9606"/>
    <lineage>
        <taxon>Eukaryota</taxon>
        <taxon>Metazoa</taxon>
        <taxon>Chordata</taxon>
        <taxon>Craniata</taxon>
        <taxon>Vertebrata</taxon>
        <taxon>Euteleostomi</taxon>
        <taxon>Mammalia</taxon>
        <taxon>Eutheria</taxon>
        <taxon>Euarchontoglires</taxon>
        <taxon>Primates</taxon>
        <taxon>Haplorrhini</taxon>
        <taxon>Catarrhini</taxon>
        <taxon>Hominidae</taxon>
        <taxon>Homo</taxon>
    </lineage>
</organism>
<reference key="1">
    <citation type="journal article" date="1999" name="Nat. Genet.">
        <title>A mutation in OTOF, encoding otoferlin, a FER-1-like protein, causes DFNB9, a nonsyndromic form of deafness.</title>
        <authorList>
            <person name="Yasunaga S."/>
            <person name="Grati M."/>
            <person name="Cohen-Salmon M."/>
            <person name="El-Amraoui A."/>
            <person name="Mustapha M."/>
            <person name="Salem N."/>
            <person name="El-Zir E."/>
            <person name="Loiselet J."/>
            <person name="Petit C."/>
        </authorList>
    </citation>
    <scope>NUCLEOTIDE SEQUENCE [MRNA] (ISOFORM 4)</scope>
    <scope>INVOLVEMENT IN DFNB9</scope>
    <source>
        <tissue>Fetus</tissue>
    </source>
</reference>
<reference key="2">
    <citation type="journal article" date="2000" name="Am. J. Hum. Genet.">
        <title>OTOF encodes multiple long and short isoforms: genetic evidence that the long ones underlie recessive deafness DFNB9.</title>
        <authorList>
            <person name="Yasunaga S."/>
            <person name="Grati M."/>
            <person name="Chardenoux S."/>
            <person name="Smith T.N."/>
            <person name="Friedman T.B."/>
            <person name="Lalwani A.K."/>
            <person name="Wilcox E.R."/>
            <person name="Petit C."/>
        </authorList>
    </citation>
    <scope>NUCLEOTIDE SEQUENCE [MRNA] (ISOFORMS 1; 2 AND 3)</scope>
    <scope>ALTERNATIVE SPLICING</scope>
    <source>
        <tissue>Brain</tissue>
    </source>
</reference>
<reference key="3">
    <citation type="journal article" date="2005" name="Nature">
        <title>Generation and annotation of the DNA sequences of human chromosomes 2 and 4.</title>
        <authorList>
            <person name="Hillier L.W."/>
            <person name="Graves T.A."/>
            <person name="Fulton R.S."/>
            <person name="Fulton L.A."/>
            <person name="Pepin K.H."/>
            <person name="Minx P."/>
            <person name="Wagner-McPherson C."/>
            <person name="Layman D."/>
            <person name="Wylie K."/>
            <person name="Sekhon M."/>
            <person name="Becker M.C."/>
            <person name="Fewell G.A."/>
            <person name="Delehaunty K.D."/>
            <person name="Miner T.L."/>
            <person name="Nash W.E."/>
            <person name="Kremitzki C."/>
            <person name="Oddy L."/>
            <person name="Du H."/>
            <person name="Sun H."/>
            <person name="Bradshaw-Cordum H."/>
            <person name="Ali J."/>
            <person name="Carter J."/>
            <person name="Cordes M."/>
            <person name="Harris A."/>
            <person name="Isak A."/>
            <person name="van Brunt A."/>
            <person name="Nguyen C."/>
            <person name="Du F."/>
            <person name="Courtney L."/>
            <person name="Kalicki J."/>
            <person name="Ozersky P."/>
            <person name="Abbott S."/>
            <person name="Armstrong J."/>
            <person name="Belter E.A."/>
            <person name="Caruso L."/>
            <person name="Cedroni M."/>
            <person name="Cotton M."/>
            <person name="Davidson T."/>
            <person name="Desai A."/>
            <person name="Elliott G."/>
            <person name="Erb T."/>
            <person name="Fronick C."/>
            <person name="Gaige T."/>
            <person name="Haakenson W."/>
            <person name="Haglund K."/>
            <person name="Holmes A."/>
            <person name="Harkins R."/>
            <person name="Kim K."/>
            <person name="Kruchowski S.S."/>
            <person name="Strong C.M."/>
            <person name="Grewal N."/>
            <person name="Goyea E."/>
            <person name="Hou S."/>
            <person name="Levy A."/>
            <person name="Martinka S."/>
            <person name="Mead K."/>
            <person name="McLellan M.D."/>
            <person name="Meyer R."/>
            <person name="Randall-Maher J."/>
            <person name="Tomlinson C."/>
            <person name="Dauphin-Kohlberg S."/>
            <person name="Kozlowicz-Reilly A."/>
            <person name="Shah N."/>
            <person name="Swearengen-Shahid S."/>
            <person name="Snider J."/>
            <person name="Strong J.T."/>
            <person name="Thompson J."/>
            <person name="Yoakum M."/>
            <person name="Leonard S."/>
            <person name="Pearman C."/>
            <person name="Trani L."/>
            <person name="Radionenko M."/>
            <person name="Waligorski J.E."/>
            <person name="Wang C."/>
            <person name="Rock S.M."/>
            <person name="Tin-Wollam A.-M."/>
            <person name="Maupin R."/>
            <person name="Latreille P."/>
            <person name="Wendl M.C."/>
            <person name="Yang S.-P."/>
            <person name="Pohl C."/>
            <person name="Wallis J.W."/>
            <person name="Spieth J."/>
            <person name="Bieri T.A."/>
            <person name="Berkowicz N."/>
            <person name="Nelson J.O."/>
            <person name="Osborne J."/>
            <person name="Ding L."/>
            <person name="Meyer R."/>
            <person name="Sabo A."/>
            <person name="Shotland Y."/>
            <person name="Sinha P."/>
            <person name="Wohldmann P.E."/>
            <person name="Cook L.L."/>
            <person name="Hickenbotham M.T."/>
            <person name="Eldred J."/>
            <person name="Williams D."/>
            <person name="Jones T.A."/>
            <person name="She X."/>
            <person name="Ciccarelli F.D."/>
            <person name="Izaurralde E."/>
            <person name="Taylor J."/>
            <person name="Schmutz J."/>
            <person name="Myers R.M."/>
            <person name="Cox D.R."/>
            <person name="Huang X."/>
            <person name="McPherson J.D."/>
            <person name="Mardis E.R."/>
            <person name="Clifton S.W."/>
            <person name="Warren W.C."/>
            <person name="Chinwalla A.T."/>
            <person name="Eddy S.R."/>
            <person name="Marra M.A."/>
            <person name="Ovcharenko I."/>
            <person name="Furey T.S."/>
            <person name="Miller W."/>
            <person name="Eichler E.E."/>
            <person name="Bork P."/>
            <person name="Suyama M."/>
            <person name="Torrents D."/>
            <person name="Waterston R.H."/>
            <person name="Wilson R.K."/>
        </authorList>
    </citation>
    <scope>NUCLEOTIDE SEQUENCE [LARGE SCALE GENOMIC DNA]</scope>
</reference>
<reference key="4">
    <citation type="submission" date="2005-09" db="EMBL/GenBank/DDBJ databases">
        <authorList>
            <person name="Mural R.J."/>
            <person name="Istrail S."/>
            <person name="Sutton G.G."/>
            <person name="Florea L."/>
            <person name="Halpern A.L."/>
            <person name="Mobarry C.M."/>
            <person name="Lippert R."/>
            <person name="Walenz B."/>
            <person name="Shatkay H."/>
            <person name="Dew I."/>
            <person name="Miller J.R."/>
            <person name="Flanigan M.J."/>
            <person name="Edwards N.J."/>
            <person name="Bolanos R."/>
            <person name="Fasulo D."/>
            <person name="Halldorsson B.V."/>
            <person name="Hannenhalli S."/>
            <person name="Turner R."/>
            <person name="Yooseph S."/>
            <person name="Lu F."/>
            <person name="Nusskern D.R."/>
            <person name="Shue B.C."/>
            <person name="Zheng X.H."/>
            <person name="Zhong F."/>
            <person name="Delcher A.L."/>
            <person name="Huson D.H."/>
            <person name="Kravitz S.A."/>
            <person name="Mouchard L."/>
            <person name="Reinert K."/>
            <person name="Remington K.A."/>
            <person name="Clark A.G."/>
            <person name="Waterman M.S."/>
            <person name="Eichler E.E."/>
            <person name="Adams M.D."/>
            <person name="Hunkapiller M.W."/>
            <person name="Myers E.W."/>
            <person name="Venter J.C."/>
        </authorList>
    </citation>
    <scope>NUCLEOTIDE SEQUENCE [LARGE SCALE GENOMIC DNA]</scope>
</reference>
<reference key="5">
    <citation type="journal article" date="2004" name="Nat. Genet.">
        <title>Complete sequencing and characterization of 21,243 full-length human cDNAs.</title>
        <authorList>
            <person name="Ota T."/>
            <person name="Suzuki Y."/>
            <person name="Nishikawa T."/>
            <person name="Otsuki T."/>
            <person name="Sugiyama T."/>
            <person name="Irie R."/>
            <person name="Wakamatsu A."/>
            <person name="Hayashi K."/>
            <person name="Sato H."/>
            <person name="Nagai K."/>
            <person name="Kimura K."/>
            <person name="Makita H."/>
            <person name="Sekine M."/>
            <person name="Obayashi M."/>
            <person name="Nishi T."/>
            <person name="Shibahara T."/>
            <person name="Tanaka T."/>
            <person name="Ishii S."/>
            <person name="Yamamoto J."/>
            <person name="Saito K."/>
            <person name="Kawai Y."/>
            <person name="Isono Y."/>
            <person name="Nakamura Y."/>
            <person name="Nagahari K."/>
            <person name="Murakami K."/>
            <person name="Yasuda T."/>
            <person name="Iwayanagi T."/>
            <person name="Wagatsuma M."/>
            <person name="Shiratori A."/>
            <person name="Sudo H."/>
            <person name="Hosoiri T."/>
            <person name="Kaku Y."/>
            <person name="Kodaira H."/>
            <person name="Kondo H."/>
            <person name="Sugawara M."/>
            <person name="Takahashi M."/>
            <person name="Kanda K."/>
            <person name="Yokoi T."/>
            <person name="Furuya T."/>
            <person name="Kikkawa E."/>
            <person name="Omura Y."/>
            <person name="Abe K."/>
            <person name="Kamihara K."/>
            <person name="Katsuta N."/>
            <person name="Sato K."/>
            <person name="Tanikawa M."/>
            <person name="Yamazaki M."/>
            <person name="Ninomiya K."/>
            <person name="Ishibashi T."/>
            <person name="Yamashita H."/>
            <person name="Murakawa K."/>
            <person name="Fujimori K."/>
            <person name="Tanai H."/>
            <person name="Kimata M."/>
            <person name="Watanabe M."/>
            <person name="Hiraoka S."/>
            <person name="Chiba Y."/>
            <person name="Ishida S."/>
            <person name="Ono Y."/>
            <person name="Takiguchi S."/>
            <person name="Watanabe S."/>
            <person name="Yosida M."/>
            <person name="Hotuta T."/>
            <person name="Kusano J."/>
            <person name="Kanehori K."/>
            <person name="Takahashi-Fujii A."/>
            <person name="Hara H."/>
            <person name="Tanase T.-O."/>
            <person name="Nomura Y."/>
            <person name="Togiya S."/>
            <person name="Komai F."/>
            <person name="Hara R."/>
            <person name="Takeuchi K."/>
            <person name="Arita M."/>
            <person name="Imose N."/>
            <person name="Musashino K."/>
            <person name="Yuuki H."/>
            <person name="Oshima A."/>
            <person name="Sasaki N."/>
            <person name="Aotsuka S."/>
            <person name="Yoshikawa Y."/>
            <person name="Matsunawa H."/>
            <person name="Ichihara T."/>
            <person name="Shiohata N."/>
            <person name="Sano S."/>
            <person name="Moriya S."/>
            <person name="Momiyama H."/>
            <person name="Satoh N."/>
            <person name="Takami S."/>
            <person name="Terashima Y."/>
            <person name="Suzuki O."/>
            <person name="Nakagawa S."/>
            <person name="Senoh A."/>
            <person name="Mizoguchi H."/>
            <person name="Goto Y."/>
            <person name="Shimizu F."/>
            <person name="Wakebe H."/>
            <person name="Hishigaki H."/>
            <person name="Watanabe T."/>
            <person name="Sugiyama A."/>
            <person name="Takemoto M."/>
            <person name="Kawakami B."/>
            <person name="Yamazaki M."/>
            <person name="Watanabe K."/>
            <person name="Kumagai A."/>
            <person name="Itakura S."/>
            <person name="Fukuzumi Y."/>
            <person name="Fujimori Y."/>
            <person name="Komiyama M."/>
            <person name="Tashiro H."/>
            <person name="Tanigami A."/>
            <person name="Fujiwara T."/>
            <person name="Ono T."/>
            <person name="Yamada K."/>
            <person name="Fujii Y."/>
            <person name="Ozaki K."/>
            <person name="Hirao M."/>
            <person name="Ohmori Y."/>
            <person name="Kawabata A."/>
            <person name="Hikiji T."/>
            <person name="Kobatake N."/>
            <person name="Inagaki H."/>
            <person name="Ikema Y."/>
            <person name="Okamoto S."/>
            <person name="Okitani R."/>
            <person name="Kawakami T."/>
            <person name="Noguchi S."/>
            <person name="Itoh T."/>
            <person name="Shigeta K."/>
            <person name="Senba T."/>
            <person name="Matsumura K."/>
            <person name="Nakajima Y."/>
            <person name="Mizuno T."/>
            <person name="Morinaga M."/>
            <person name="Sasaki M."/>
            <person name="Togashi T."/>
            <person name="Oyama M."/>
            <person name="Hata H."/>
            <person name="Watanabe M."/>
            <person name="Komatsu T."/>
            <person name="Mizushima-Sugano J."/>
            <person name="Satoh T."/>
            <person name="Shirai Y."/>
            <person name="Takahashi Y."/>
            <person name="Nakagawa K."/>
            <person name="Okumura K."/>
            <person name="Nagase T."/>
            <person name="Nomura N."/>
            <person name="Kikuchi H."/>
            <person name="Masuho Y."/>
            <person name="Yamashita R."/>
            <person name="Nakai K."/>
            <person name="Yada T."/>
            <person name="Nakamura Y."/>
            <person name="Ohara O."/>
            <person name="Isogai T."/>
            <person name="Sugano S."/>
        </authorList>
    </citation>
    <scope>NUCLEOTIDE SEQUENCE [LARGE SCALE MRNA] OF 1174-1997 (ISOFORM 5)</scope>
    <source>
        <tissue>Thalamus</tissue>
    </source>
</reference>
<reference key="6">
    <citation type="journal article" date="2002" name="J. Med. Genet.">
        <title>Q829X, a novel mutation in the gene encoding otoferlin (OTOF), is frequently found in Spanish patients with prelingual non-syndromic hearing loss.</title>
        <authorList>
            <person name="Migliosi V."/>
            <person name="Modamio-Hoeybjoer S."/>
            <person name="Moreno-Pelayo M.A."/>
            <person name="Rodriguez-Ballesteros M."/>
            <person name="Villamar M."/>
            <person name="Telleria D."/>
            <person name="Menendez I."/>
            <person name="Moreno F."/>
            <person name="Del Castillo I."/>
        </authorList>
    </citation>
    <scope>VARIANTS CYS-82 AND SER-773</scope>
</reference>
<reference key="7">
    <citation type="journal article" date="2002" name="Neurobiol. Dis.">
        <title>Substitutions in the conserved C2C domain of otoferlin cause DFNB9, a form of nonsyndromic autosomal recessive deafness.</title>
        <authorList>
            <person name="Mirghomizadeh F."/>
            <person name="Pfister M."/>
            <person name="Apaydin F."/>
            <person name="Petit C."/>
            <person name="Kupka S."/>
            <person name="Pusch C.M."/>
            <person name="Zenner H.P."/>
            <person name="Blin N."/>
        </authorList>
    </citation>
    <scope>VARIANTS DFNB9 GLN-490 AND THR-515</scope>
</reference>
<reference key="8">
    <citation type="journal article" date="2005" name="Am. J. Med. Genet. A">
        <title>A novel missense mutation in a C2 domain of OTOF results in autosomal recessive auditory neuropathy.</title>
        <authorList>
            <person name="Tekin M."/>
            <person name="Akcayoz D."/>
            <person name="Incesulu A."/>
        </authorList>
    </citation>
    <scope>VARIANT DFNB9 PRO-1011</scope>
</reference>
<reference key="9">
    <citation type="journal article" date="2005" name="Clin. Genet.">
        <title>Assessment of the genetic causes of recessive childhood non-syndromic deafness in the UK - implications for genetic testing.</title>
        <authorList>
            <person name="Hutchin T."/>
            <person name="Coy N.N."/>
            <person name="Conlon H."/>
            <person name="Telford E."/>
            <person name="Bromelow K."/>
            <person name="Blaydon D."/>
            <person name="Taylor G."/>
            <person name="Coghill E."/>
            <person name="Brown S."/>
            <person name="Trembath R."/>
            <person name="Liu X.Z."/>
            <person name="Bitner-Glindzicz M."/>
            <person name="Mueller R."/>
        </authorList>
    </citation>
    <scope>INVOLVEMENT IN DFNB9</scope>
    <scope>VARIANT TRP-822</scope>
</reference>
<reference key="10">
    <citation type="journal article" date="2006" name="J. Med. Genet.">
        <title>OTOF mutations revealed by genetic analysis of hearing loss families including a potential temperature sensitive auditory neuropathy allele.</title>
        <authorList>
            <person name="Varga R."/>
            <person name="Avenarius M.R."/>
            <person name="Kelley P.M."/>
            <person name="Keats B.J."/>
            <person name="Berlin C.I."/>
            <person name="Hood L.J."/>
            <person name="Morlet T.G."/>
            <person name="Brashears S.M."/>
            <person name="Starr A."/>
            <person name="Cohn E.S."/>
            <person name="Smith R.J.H."/>
            <person name="Kimberling W.J."/>
        </authorList>
    </citation>
    <scope>VARIANTS DFNB9 GLN-490; HIS-794 AND ALA-1825</scope>
    <scope>VARIANTS AUNB1 THR-515; PRO-1011; GLN-1939 AND ARG-1987</scope>
    <scope>VARIANTS VAL-53; CYS-82; MET-575; SER-773; TRP-822; PRO-1083; GLN-1157; GLU-1322; MET-1625; SER-1646 AND ASP-1888</scope>
</reference>
<reference key="11">
    <citation type="journal article" date="2006" name="Science">
        <title>The consensus coding sequences of human breast and colorectal cancers.</title>
        <authorList>
            <person name="Sjoeblom T."/>
            <person name="Jones S."/>
            <person name="Wood L.D."/>
            <person name="Parsons D.W."/>
            <person name="Lin J."/>
            <person name="Barber T.D."/>
            <person name="Mandelker D."/>
            <person name="Leary R.J."/>
            <person name="Ptak J."/>
            <person name="Silliman N."/>
            <person name="Szabo S."/>
            <person name="Buckhaults P."/>
            <person name="Farrell C."/>
            <person name="Meeh P."/>
            <person name="Markowitz S.D."/>
            <person name="Willis J."/>
            <person name="Dawson D."/>
            <person name="Willson J.K.V."/>
            <person name="Gazdar A.F."/>
            <person name="Hartigan J."/>
            <person name="Wu L."/>
            <person name="Liu C."/>
            <person name="Parmigiani G."/>
            <person name="Park B.H."/>
            <person name="Bachman K.E."/>
            <person name="Papadopoulos N."/>
            <person name="Vogelstein B."/>
            <person name="Kinzler K.W."/>
            <person name="Velculescu V.E."/>
        </authorList>
    </citation>
    <scope>VARIANTS [LARGE SCALE ANALYSIS] LYS-1323 AND VAL-1547</scope>
</reference>
<reference key="12">
    <citation type="journal article" date="2008" name="Hum. Mutat.">
        <title>A multicenter study on the prevalence and spectrum of mutations in the otoferlin gene (OTOF) in subjects with nonsyndromic hearing impairment and auditory neuropathy.</title>
        <authorList>
            <person name="Rodriguez-Ballesteros M."/>
            <person name="Reynoso R."/>
            <person name="Olarte M."/>
            <person name="Villamar M."/>
            <person name="Morera C."/>
            <person name="Santarelli R."/>
            <person name="Arslan E."/>
            <person name="Meda C."/>
            <person name="Curet C."/>
            <person name="Voelter C."/>
            <person name="Sainz-Quevedo M."/>
            <person name="Castorina P."/>
            <person name="Ambrosetti U."/>
            <person name="Berrettini S."/>
            <person name="Frei K."/>
            <person name="Tedin S."/>
            <person name="Smith J."/>
            <person name="Cruz Tapia M."/>
            <person name="Cavalle L."/>
            <person name="Gelvez N."/>
            <person name="Primignani P."/>
            <person name="Gomez-Rosas E."/>
            <person name="Martin M."/>
            <person name="Moreno-Pelayo M.A."/>
            <person name="Tamayo M."/>
            <person name="Moreno-Barral J."/>
            <person name="Moreno F."/>
            <person name="del Castillo I."/>
        </authorList>
    </citation>
    <scope>VARIANTS AUNB1 HIS-255; GLU-964; PRO-1138 AND CYS-1795</scope>
    <scope>VARIANTS GLN-1236 AND LYS-1688</scope>
</reference>
<reference key="13">
    <citation type="journal article" date="2016" name="Am. J. Med. Genet. A">
        <title>Clinical and molecular delineation of dysequilibrium syndrome type 2 and profound sensorineural hearing loss in an inbred Arab family.</title>
        <authorList>
            <person name="Komara M."/>
            <person name="John A."/>
            <person name="Suleiman J."/>
            <person name="Ali B.R."/>
            <person name="Al-Gazali L."/>
        </authorList>
    </citation>
    <scope>VARIANT DFNB9 GLN-1157</scope>
</reference>
<reference key="14">
    <citation type="journal article" date="2016" name="Nature">
        <title>Analysis of protein-coding genetic variation in 60,706 humans.</title>
        <authorList>
            <consortium name="Exome Aggregation Consortium"/>
            <person name="Lek M."/>
            <person name="Karczewski K.J."/>
            <person name="Minikel E.V."/>
            <person name="Samocha K.E."/>
            <person name="Banks E."/>
            <person name="Fennell T."/>
            <person name="O'Donnell-Luria A.H."/>
            <person name="Ware J.S."/>
            <person name="Hill A.J."/>
            <person name="Cummings B.B."/>
            <person name="Tukiainen T."/>
            <person name="Birnbaum D.P."/>
            <person name="Kosmicki J.A."/>
            <person name="Duncan L.E."/>
            <person name="Estrada K."/>
            <person name="Zhao F."/>
            <person name="Zou J."/>
            <person name="Pierce-Hoffman E."/>
            <person name="Berghout J."/>
            <person name="Cooper D.N."/>
            <person name="Deflaux N."/>
            <person name="DePristo M."/>
            <person name="Do R."/>
            <person name="Flannick J."/>
            <person name="Fromer M."/>
            <person name="Gauthier L."/>
            <person name="Goldstein J."/>
            <person name="Gupta N."/>
            <person name="Howrigan D."/>
            <person name="Kiezun A."/>
            <person name="Kurki M.I."/>
            <person name="Moonshine A.L."/>
            <person name="Natarajan P."/>
            <person name="Orozco L."/>
            <person name="Peloso G.M."/>
            <person name="Poplin R."/>
            <person name="Rivas M.A."/>
            <person name="Ruano-Rubio V."/>
            <person name="Rose S.A."/>
            <person name="Ruderfer D.M."/>
            <person name="Shakir K."/>
            <person name="Stenson P.D."/>
            <person name="Stevens C."/>
            <person name="Thomas B.P."/>
            <person name="Tiao G."/>
            <person name="Tusie-Luna M.T."/>
            <person name="Weisburd B."/>
            <person name="Won H.H."/>
            <person name="Yu D."/>
            <person name="Altshuler D.M."/>
            <person name="Ardissino D."/>
            <person name="Boehnke M."/>
            <person name="Danesh J."/>
            <person name="Donnelly S."/>
            <person name="Elosua R."/>
            <person name="Florez J.C."/>
            <person name="Gabriel S.B."/>
            <person name="Getz G."/>
            <person name="Glatt S.J."/>
            <person name="Hultman C.M."/>
            <person name="Kathiresan S."/>
            <person name="Laakso M."/>
            <person name="McCarroll S."/>
            <person name="McCarthy M.I."/>
            <person name="McGovern D."/>
            <person name="McPherson R."/>
            <person name="Neale B.M."/>
            <person name="Palotie A."/>
            <person name="Purcell S.M."/>
            <person name="Saleheen D."/>
            <person name="Scharf J.M."/>
            <person name="Sklar P."/>
            <person name="Sullivan P.F."/>
            <person name="Tuomilehto J."/>
            <person name="Tsuang M.T."/>
            <person name="Watkins H.C."/>
            <person name="Wilson J.G."/>
            <person name="Daly M.J."/>
            <person name="MacArthur D.G."/>
        </authorList>
    </citation>
    <scope>VARIANT TRP-822</scope>
</reference>
<dbReference type="EMBL" id="AF107403">
    <property type="protein sequence ID" value="AAD26117.1"/>
    <property type="molecule type" value="mRNA"/>
</dbReference>
<dbReference type="EMBL" id="AF183185">
    <property type="protein sequence ID" value="AAG12991.1"/>
    <property type="molecule type" value="mRNA"/>
</dbReference>
<dbReference type="EMBL" id="AF183186">
    <property type="protein sequence ID" value="AAG12992.1"/>
    <property type="molecule type" value="mRNA"/>
</dbReference>
<dbReference type="EMBL" id="AF183187">
    <property type="protein sequence ID" value="AAG17468.1"/>
    <property type="molecule type" value="mRNA"/>
</dbReference>
<dbReference type="EMBL" id="AC093378">
    <property type="protein sequence ID" value="AAY15083.1"/>
    <property type="molecule type" value="Genomic_DNA"/>
</dbReference>
<dbReference type="EMBL" id="AC108070">
    <property type="status" value="NOT_ANNOTATED_CDS"/>
    <property type="molecule type" value="Genomic_DNA"/>
</dbReference>
<dbReference type="EMBL" id="CH471053">
    <property type="protein sequence ID" value="EAX00684.1"/>
    <property type="molecule type" value="Genomic_DNA"/>
</dbReference>
<dbReference type="EMBL" id="CH471053">
    <property type="protein sequence ID" value="EAX00686.1"/>
    <property type="molecule type" value="Genomic_DNA"/>
</dbReference>
<dbReference type="EMBL" id="AK296272">
    <property type="protein sequence ID" value="BAG58982.1"/>
    <property type="status" value="ALT_INIT"/>
    <property type="molecule type" value="mRNA"/>
</dbReference>
<dbReference type="CCDS" id="CCDS1724.1">
    <molecule id="Q9HC10-2"/>
</dbReference>
<dbReference type="CCDS" id="CCDS1725.1">
    <molecule id="Q9HC10-1"/>
</dbReference>
<dbReference type="CCDS" id="CCDS1726.1">
    <molecule id="Q9HC10-4"/>
</dbReference>
<dbReference type="CCDS" id="CCDS74497.1">
    <molecule id="Q9HC10-5"/>
</dbReference>
<dbReference type="RefSeq" id="NP_001274418.1">
    <molecule id="Q9HC10-5"/>
    <property type="nucleotide sequence ID" value="NM_001287489.2"/>
</dbReference>
<dbReference type="RefSeq" id="NP_004793.2">
    <molecule id="Q9HC10-4"/>
    <property type="nucleotide sequence ID" value="NM_004802.3"/>
</dbReference>
<dbReference type="RefSeq" id="NP_919224.1">
    <molecule id="Q9HC10-1"/>
    <property type="nucleotide sequence ID" value="NM_194248.3"/>
</dbReference>
<dbReference type="RefSeq" id="NP_919303.1">
    <molecule id="Q9HC10-3"/>
    <property type="nucleotide sequence ID" value="NM_194322.3"/>
</dbReference>
<dbReference type="RefSeq" id="NP_919304.1">
    <molecule id="Q9HC10-2"/>
    <property type="nucleotide sequence ID" value="NM_194323.3"/>
</dbReference>
<dbReference type="SMR" id="Q9HC10"/>
<dbReference type="BioGRID" id="114782">
    <property type="interactions" value="22"/>
</dbReference>
<dbReference type="FunCoup" id="Q9HC10">
    <property type="interactions" value="9"/>
</dbReference>
<dbReference type="IntAct" id="Q9HC10">
    <property type="interactions" value="6"/>
</dbReference>
<dbReference type="STRING" id="9606.ENSP00000272371"/>
<dbReference type="iPTMnet" id="Q9HC10"/>
<dbReference type="PhosphoSitePlus" id="Q9HC10"/>
<dbReference type="BioMuta" id="OTOF"/>
<dbReference type="DMDM" id="116242695"/>
<dbReference type="jPOST" id="Q9HC10"/>
<dbReference type="MassIVE" id="Q9HC10"/>
<dbReference type="PaxDb" id="9606-ENSP00000272371"/>
<dbReference type="PeptideAtlas" id="Q9HC10"/>
<dbReference type="ProteomicsDB" id="81618">
    <molecule id="Q9HC10-1"/>
</dbReference>
<dbReference type="ProteomicsDB" id="81619">
    <molecule id="Q9HC10-2"/>
</dbReference>
<dbReference type="ProteomicsDB" id="81620">
    <molecule id="Q9HC10-3"/>
</dbReference>
<dbReference type="ProteomicsDB" id="81621">
    <molecule id="Q9HC10-4"/>
</dbReference>
<dbReference type="ProteomicsDB" id="81622">
    <molecule id="Q9HC10-5"/>
</dbReference>
<dbReference type="Antibodypedia" id="2369">
    <property type="antibodies" value="57 antibodies from 21 providers"/>
</dbReference>
<dbReference type="DNASU" id="9381"/>
<dbReference type="Ensembl" id="ENST00000272371.7">
    <molecule id="Q9HC10-1"/>
    <property type="protein sequence ID" value="ENSP00000272371.2"/>
    <property type="gene ID" value="ENSG00000115155.19"/>
</dbReference>
<dbReference type="Ensembl" id="ENST00000338581.10">
    <molecule id="Q9HC10-4"/>
    <property type="protein sequence ID" value="ENSP00000345137.6"/>
    <property type="gene ID" value="ENSG00000115155.19"/>
</dbReference>
<dbReference type="Ensembl" id="ENST00000339598.8">
    <molecule id="Q9HC10-2"/>
    <property type="protein sequence ID" value="ENSP00000344521.3"/>
    <property type="gene ID" value="ENSG00000115155.19"/>
</dbReference>
<dbReference type="Ensembl" id="ENST00000403946.7">
    <molecule id="Q9HC10-5"/>
    <property type="protein sequence ID" value="ENSP00000385255.3"/>
    <property type="gene ID" value="ENSG00000115155.19"/>
</dbReference>
<dbReference type="GeneID" id="9381"/>
<dbReference type="KEGG" id="hsa:9381"/>
<dbReference type="MANE-Select" id="ENST00000272371.7">
    <property type="protein sequence ID" value="ENSP00000272371.2"/>
    <property type="RefSeq nucleotide sequence ID" value="NM_194248.3"/>
    <property type="RefSeq protein sequence ID" value="NP_919224.1"/>
</dbReference>
<dbReference type="UCSC" id="uc002rhh.3">
    <molecule id="Q9HC10-1"/>
    <property type="organism name" value="human"/>
</dbReference>
<dbReference type="AGR" id="HGNC:8515"/>
<dbReference type="CTD" id="9381"/>
<dbReference type="DisGeNET" id="9381"/>
<dbReference type="GeneCards" id="OTOF"/>
<dbReference type="GeneReviews" id="OTOF"/>
<dbReference type="HGNC" id="HGNC:8515">
    <property type="gene designation" value="OTOF"/>
</dbReference>
<dbReference type="HPA" id="ENSG00000115155">
    <property type="expression patterns" value="Group enriched (bone marrow, brain)"/>
</dbReference>
<dbReference type="MalaCards" id="OTOF"/>
<dbReference type="MIM" id="601071">
    <property type="type" value="phenotype"/>
</dbReference>
<dbReference type="MIM" id="603681">
    <property type="type" value="gene"/>
</dbReference>
<dbReference type="neXtProt" id="NX_Q9HC10"/>
<dbReference type="OpenTargets" id="ENSG00000115155"/>
<dbReference type="Orphanet" id="90636">
    <property type="disease" value="Rare autosomal recessive non-syndromic sensorineural deafness type DFNB"/>
</dbReference>
<dbReference type="PharmGKB" id="PA32841"/>
<dbReference type="VEuPathDB" id="HostDB:ENSG00000115155"/>
<dbReference type="eggNOG" id="KOG1326">
    <property type="taxonomic scope" value="Eukaryota"/>
</dbReference>
<dbReference type="GeneTree" id="ENSGT00940000155086"/>
<dbReference type="HOGENOM" id="CLU_001183_1_0_1"/>
<dbReference type="InParanoid" id="Q9HC10"/>
<dbReference type="OMA" id="YYYLPYW"/>
<dbReference type="OrthoDB" id="270970at2759"/>
<dbReference type="PAN-GO" id="Q9HC10">
    <property type="GO annotations" value="6 GO annotations based on evolutionary models"/>
</dbReference>
<dbReference type="PhylomeDB" id="Q9HC10"/>
<dbReference type="TreeFam" id="TF316871"/>
<dbReference type="PathwayCommons" id="Q9HC10"/>
<dbReference type="Reactome" id="R-HSA-9609523">
    <property type="pathway name" value="Insertion of tail-anchored proteins into the endoplasmic reticulum membrane"/>
</dbReference>
<dbReference type="Reactome" id="R-HSA-9662360">
    <property type="pathway name" value="Sensory processing of sound by inner hair cells of the cochlea"/>
</dbReference>
<dbReference type="SignaLink" id="Q9HC10"/>
<dbReference type="BioGRID-ORCS" id="9381">
    <property type="hits" value="21 hits in 1144 CRISPR screens"/>
</dbReference>
<dbReference type="ChiTaRS" id="OTOF">
    <property type="organism name" value="human"/>
</dbReference>
<dbReference type="GeneWiki" id="OTOF"/>
<dbReference type="GenomeRNAi" id="9381"/>
<dbReference type="Pharos" id="Q9HC10">
    <property type="development level" value="Tbio"/>
</dbReference>
<dbReference type="PRO" id="PR:Q9HC10"/>
<dbReference type="Proteomes" id="UP000005640">
    <property type="component" value="Chromosome 2"/>
</dbReference>
<dbReference type="RNAct" id="Q9HC10">
    <property type="molecule type" value="protein"/>
</dbReference>
<dbReference type="Bgee" id="ENSG00000115155">
    <property type="expression patterns" value="Expressed in nucleus accumbens and 85 other cell types or tissues"/>
</dbReference>
<dbReference type="ExpressionAtlas" id="Q9HC10">
    <property type="expression patterns" value="baseline and differential"/>
</dbReference>
<dbReference type="GO" id="GO:0016323">
    <property type="term" value="C:basolateral plasma membrane"/>
    <property type="evidence" value="ECO:0007669"/>
    <property type="project" value="UniProtKB-SubCell"/>
</dbReference>
<dbReference type="GO" id="GO:0042995">
    <property type="term" value="C:cell projection"/>
    <property type="evidence" value="ECO:0007669"/>
    <property type="project" value="UniProtKB-KW"/>
</dbReference>
<dbReference type="GO" id="GO:0005829">
    <property type="term" value="C:cytosol"/>
    <property type="evidence" value="ECO:0000304"/>
    <property type="project" value="Reactome"/>
</dbReference>
<dbReference type="GO" id="GO:0005789">
    <property type="term" value="C:endoplasmic reticulum membrane"/>
    <property type="evidence" value="ECO:0007669"/>
    <property type="project" value="UniProtKB-SubCell"/>
</dbReference>
<dbReference type="GO" id="GO:0000139">
    <property type="term" value="C:Golgi membrane"/>
    <property type="evidence" value="ECO:0007669"/>
    <property type="project" value="UniProtKB-SubCell"/>
</dbReference>
<dbReference type="GO" id="GO:0016020">
    <property type="term" value="C:membrane"/>
    <property type="evidence" value="ECO:0000304"/>
    <property type="project" value="ProtInc"/>
</dbReference>
<dbReference type="GO" id="GO:0042734">
    <property type="term" value="C:presynaptic membrane"/>
    <property type="evidence" value="ECO:0007669"/>
    <property type="project" value="UniProtKB-SubCell"/>
</dbReference>
<dbReference type="GO" id="GO:0030672">
    <property type="term" value="C:synaptic vesicle membrane"/>
    <property type="evidence" value="ECO:0000250"/>
    <property type="project" value="UniProtKB"/>
</dbReference>
<dbReference type="GO" id="GO:0005509">
    <property type="term" value="F:calcium ion binding"/>
    <property type="evidence" value="ECO:0000250"/>
    <property type="project" value="UniProtKB"/>
</dbReference>
<dbReference type="GO" id="GO:0061025">
    <property type="term" value="P:membrane fusion"/>
    <property type="evidence" value="ECO:0000304"/>
    <property type="project" value="ProtInc"/>
</dbReference>
<dbReference type="GO" id="GO:0046928">
    <property type="term" value="P:regulation of neurotransmitter secretion"/>
    <property type="evidence" value="ECO:0000318"/>
    <property type="project" value="GO_Central"/>
</dbReference>
<dbReference type="GO" id="GO:0007605">
    <property type="term" value="P:sensory perception of sound"/>
    <property type="evidence" value="ECO:0000304"/>
    <property type="project" value="ProtInc"/>
</dbReference>
<dbReference type="GO" id="GO:0016079">
    <property type="term" value="P:synaptic vesicle exocytosis"/>
    <property type="evidence" value="ECO:0000250"/>
    <property type="project" value="UniProtKB"/>
</dbReference>
<dbReference type="CDD" id="cd08373">
    <property type="entry name" value="C2A_Ferlin"/>
    <property type="match status" value="1"/>
</dbReference>
<dbReference type="CDD" id="cd04011">
    <property type="entry name" value="C2B_Ferlin"/>
    <property type="match status" value="1"/>
</dbReference>
<dbReference type="CDD" id="cd04018">
    <property type="entry name" value="C2C_Ferlin"/>
    <property type="match status" value="1"/>
</dbReference>
<dbReference type="CDD" id="cd04017">
    <property type="entry name" value="C2D_Ferlin"/>
    <property type="match status" value="1"/>
</dbReference>
<dbReference type="CDD" id="cd04037">
    <property type="entry name" value="C2E_Ferlin"/>
    <property type="match status" value="1"/>
</dbReference>
<dbReference type="CDD" id="cd08374">
    <property type="entry name" value="C2F_Ferlin"/>
    <property type="match status" value="1"/>
</dbReference>
<dbReference type="FunFam" id="2.60.40.150:FF:000009">
    <property type="entry name" value="dysferlin isoform X2"/>
    <property type="match status" value="1"/>
</dbReference>
<dbReference type="FunFam" id="2.60.40.150:FF:000081">
    <property type="entry name" value="otoferlin isoform X1"/>
    <property type="match status" value="1"/>
</dbReference>
<dbReference type="FunFam" id="2.60.40.150:FF:000089">
    <property type="entry name" value="otoferlin isoform X1"/>
    <property type="match status" value="1"/>
</dbReference>
<dbReference type="FunFam" id="2.60.40.150:FF:000118">
    <property type="entry name" value="otoferlin isoform X1"/>
    <property type="match status" value="1"/>
</dbReference>
<dbReference type="FunFam" id="2.60.40.150:FF:000034">
    <property type="entry name" value="otoferlin isoform X2"/>
    <property type="match status" value="1"/>
</dbReference>
<dbReference type="FunFam" id="2.60.40.150:FF:000054">
    <property type="entry name" value="otoferlin isoform X2"/>
    <property type="match status" value="1"/>
</dbReference>
<dbReference type="Gene3D" id="2.60.40.150">
    <property type="entry name" value="C2 domain"/>
    <property type="match status" value="6"/>
</dbReference>
<dbReference type="InterPro" id="IPR000008">
    <property type="entry name" value="C2_dom"/>
</dbReference>
<dbReference type="InterPro" id="IPR035892">
    <property type="entry name" value="C2_domain_sf"/>
</dbReference>
<dbReference type="InterPro" id="IPR037726">
    <property type="entry name" value="C2A_Ferlin"/>
</dbReference>
<dbReference type="InterPro" id="IPR037720">
    <property type="entry name" value="C2B_Ferlin"/>
</dbReference>
<dbReference type="InterPro" id="IPR037722">
    <property type="entry name" value="C2C_Ferlin"/>
</dbReference>
<dbReference type="InterPro" id="IPR037723">
    <property type="entry name" value="C2D_Ferlin"/>
</dbReference>
<dbReference type="InterPro" id="IPR037724">
    <property type="entry name" value="C2E_Ferlin"/>
</dbReference>
<dbReference type="InterPro" id="IPR037725">
    <property type="entry name" value="C2F_Ferlin"/>
</dbReference>
<dbReference type="InterPro" id="IPR012968">
    <property type="entry name" value="FerIin_dom"/>
</dbReference>
<dbReference type="InterPro" id="IPR037721">
    <property type="entry name" value="Ferlin"/>
</dbReference>
<dbReference type="InterPro" id="IPR012561">
    <property type="entry name" value="Ferlin_B-domain"/>
</dbReference>
<dbReference type="InterPro" id="IPR032362">
    <property type="entry name" value="Ferlin_C"/>
</dbReference>
<dbReference type="InterPro" id="IPR055072">
    <property type="entry name" value="Ferlin_DSRM"/>
</dbReference>
<dbReference type="PANTHER" id="PTHR12546">
    <property type="entry name" value="FER-1-LIKE"/>
    <property type="match status" value="1"/>
</dbReference>
<dbReference type="PANTHER" id="PTHR12546:SF32">
    <property type="entry name" value="OTOFERLIN"/>
    <property type="match status" value="1"/>
</dbReference>
<dbReference type="Pfam" id="PF00168">
    <property type="entry name" value="C2"/>
    <property type="match status" value="6"/>
</dbReference>
<dbReference type="Pfam" id="PF22901">
    <property type="entry name" value="dsrm_Ferlin"/>
    <property type="match status" value="1"/>
</dbReference>
<dbReference type="Pfam" id="PF08150">
    <property type="entry name" value="FerB"/>
    <property type="match status" value="1"/>
</dbReference>
<dbReference type="Pfam" id="PF08151">
    <property type="entry name" value="FerI"/>
    <property type="match status" value="1"/>
</dbReference>
<dbReference type="Pfam" id="PF16165">
    <property type="entry name" value="Ferlin_C"/>
    <property type="match status" value="1"/>
</dbReference>
<dbReference type="SMART" id="SM00239">
    <property type="entry name" value="C2"/>
    <property type="match status" value="6"/>
</dbReference>
<dbReference type="SMART" id="SM01201">
    <property type="entry name" value="FerB"/>
    <property type="match status" value="1"/>
</dbReference>
<dbReference type="SMART" id="SM01202">
    <property type="entry name" value="FerI"/>
    <property type="match status" value="1"/>
</dbReference>
<dbReference type="SUPFAM" id="SSF49562">
    <property type="entry name" value="C2 domain (Calcium/lipid-binding domain, CaLB)"/>
    <property type="match status" value="7"/>
</dbReference>
<dbReference type="PROSITE" id="PS50004">
    <property type="entry name" value="C2"/>
    <property type="match status" value="7"/>
</dbReference>
<gene>
    <name type="primary">OTOF</name>
    <name type="synonym">FER1L2</name>
</gene>
<comment type="function">
    <text evidence="3">Key calcium ion sensor involved in the Ca(2+)-triggered synaptic vesicle-plasma membrane fusion and in the control of neurotransmitter release at these output synapses. Interacts in a calcium-dependent manner to the presynaptic SNARE proteins at ribbon synapses of cochlear inner hair cells (IHCs) to trigger exocytosis of neurotransmitter. Also essential to synaptic exocytosis in immature outer hair cells (OHCs). May also play a role within the recycling of endosomes (By similarity).</text>
</comment>
<comment type="cofactor">
    <cofactor evidence="5">
        <name>Ca(2+)</name>
        <dbReference type="ChEBI" id="CHEBI:29108"/>
    </cofactor>
    <text evidence="1">Binds Ca(2+). The ions are bound to the C2 1 domain.</text>
</comment>
<comment type="subunit">
    <text evidence="1">Interacts with SNAP2; the interaction is direct. Interacts with STX1; the interaction is direct. Interacts with RAB8B (By similarity).</text>
</comment>
<comment type="subcellular location">
    <subcellularLocation>
        <location evidence="3">Cytoplasmic vesicle</location>
        <location evidence="3">Secretory vesicle</location>
        <location evidence="3">Synaptic vesicle membrane</location>
        <topology evidence="3">Single-pass type II membrane protein</topology>
    </subcellularLocation>
    <subcellularLocation>
        <location evidence="3">Basolateral cell membrane</location>
        <topology evidence="3">Single-pass type II membrane protein</topology>
    </subcellularLocation>
    <subcellularLocation>
        <location evidence="3">Endoplasmic reticulum membrane</location>
        <topology evidence="3">Single-pass type II membrane protein</topology>
    </subcellularLocation>
    <subcellularLocation>
        <location evidence="3">Golgi apparatus membrane</location>
        <topology evidence="3">Single-pass type II membrane protein</topology>
    </subcellularLocation>
    <subcellularLocation>
        <location evidence="3">Presynaptic cell membrane</location>
        <topology evidence="3">Single-pass type II membrane protein</topology>
    </subcellularLocation>
    <subcellularLocation>
        <location evidence="3">Cell membrane</location>
        <topology evidence="3">Single-pass type II membrane protein</topology>
    </subcellularLocation>
    <text evidence="3">Detected at basolateral cell membrane with synaptic vesicles surrounding the ribbon and at the presynaptic plasma membrane in the inner hair cells (IHCs) at postnatal day 30 (P30). Colocalizes with GPR25 and RAB8B in inner hair cells.</text>
</comment>
<comment type="alternative products">
    <event type="alternative splicing"/>
    <isoform>
        <id>Q9HC10-1</id>
        <name>1</name>
        <name>Long</name>
        <sequence type="displayed"/>
    </isoform>
    <isoform>
        <id>Q9HC10-2</id>
        <name>2</name>
        <name>Short-1</name>
        <sequence type="described" ref="VSP_001507 VSP_001508 VSP_001511"/>
    </isoform>
    <isoform>
        <id>Q9HC10-3</id>
        <name>3</name>
        <name>Short-2</name>
        <sequence type="described" ref="VSP_001509 VSP_001510"/>
    </isoform>
    <isoform>
        <id>Q9HC10-4</id>
        <name>4</name>
        <name>Short-3</name>
        <sequence type="described" ref="VSP_001507 VSP_001508"/>
    </isoform>
    <isoform>
        <id>Q9HC10-5</id>
        <name>5</name>
        <sequence type="described" ref="VSP_001511"/>
    </isoform>
    <text>Additional isoforms seem to exist.</text>
</comment>
<comment type="tissue specificity">
    <text>Isoform 1 and isoform 3 are found in adult brain. Isoform 2 is expressed in the fetus and in adult brain, heart, placenta, skeletal muscle and kidney.</text>
</comment>
<comment type="domain">
    <text evidence="2">The N-terminal first 124 residues can be classified as C2 domain, based on their 3D-structure. They are not sufficient for calcium ion or phospholipid binding (By similarity).</text>
</comment>
<comment type="disease" evidence="7 9 10 11 12 15">
    <disease id="DI-00860">
        <name>Deafness, autosomal recessive, 9</name>
        <acronym>DFNB9</acronym>
        <description>A form of non-syndromic sensorineural hearing loss. Sensorineural deafness results from damage to the neural receptors of the inner ear, the nerve pathways to the brain, or the area of the brain that receives sound information.</description>
        <dbReference type="MIM" id="601071"/>
    </disease>
    <text>The disease is caused by variants affecting the gene represented in this entry.</text>
</comment>
<comment type="disease" evidence="12 14">
    <disease id="DI-02064">
        <name>Auditory neuropathy, autosomal recessive, 1</name>
        <acronym>AUNB1</acronym>
        <description>A form of sensorineural hearing loss with absent or severely abnormal auditory brainstem response, in the presence of normal cochlear outer hair cell function and normal otoacoustic emissions. Auditory neuropathies result from a lesion in the area including the inner hair cells, connections between the inner hair cells and the cochlear branch of the auditory nerve, the auditory nerve itself and auditory pathways of the brainstem. In some cases AUNB1 phenotype can be temperature sensitive.</description>
        <dbReference type="MIM" id="601071"/>
    </disease>
    <text>The disease is caused by variants affecting the gene represented in this entry.</text>
</comment>
<comment type="similarity">
    <text evidence="20">Belongs to the ferlin family.</text>
</comment>
<comment type="sequence caution" evidence="20">
    <conflict type="erroneous initiation">
        <sequence resource="EMBL-CDS" id="BAG58982"/>
    </conflict>
    <text>Truncated N-terminus.</text>
</comment>
<protein>
    <recommendedName>
        <fullName>Otoferlin</fullName>
    </recommendedName>
    <alternativeName>
        <fullName>Fer-1-like protein 2</fullName>
    </alternativeName>
</protein>
<accession>Q9HC10</accession>
<accession>B4DJX0</accession>
<accession>B5MCC1</accession>
<accession>B9A0H6</accession>
<accession>Q53R90</accession>
<accession>Q9HC08</accession>
<accession>Q9HC09</accession>
<accession>Q9Y650</accession>
<evidence type="ECO:0000250" key="1"/>
<evidence type="ECO:0000250" key="2">
    <source>
        <dbReference type="UniProtKB" id="Q9ERC5"/>
    </source>
</evidence>
<evidence type="ECO:0000250" key="3">
    <source>
        <dbReference type="UniProtKB" id="Q9ESF1"/>
    </source>
</evidence>
<evidence type="ECO:0000255" key="4"/>
<evidence type="ECO:0000255" key="5">
    <source>
        <dbReference type="PROSITE-ProRule" id="PRU00041"/>
    </source>
</evidence>
<evidence type="ECO:0000256" key="6">
    <source>
        <dbReference type="SAM" id="MobiDB-lite"/>
    </source>
</evidence>
<evidence type="ECO:0000269" key="7">
    <source>
    </source>
</evidence>
<evidence type="ECO:0000269" key="8">
    <source>
    </source>
</evidence>
<evidence type="ECO:0000269" key="9">
    <source>
    </source>
</evidence>
<evidence type="ECO:0000269" key="10">
    <source>
    </source>
</evidence>
<evidence type="ECO:0000269" key="11">
    <source>
    </source>
</evidence>
<evidence type="ECO:0000269" key="12">
    <source>
    </source>
</evidence>
<evidence type="ECO:0000269" key="13">
    <source>
    </source>
</evidence>
<evidence type="ECO:0000269" key="14">
    <source>
    </source>
</evidence>
<evidence type="ECO:0000269" key="15">
    <source>
    </source>
</evidence>
<evidence type="ECO:0000269" key="16">
    <source>
    </source>
</evidence>
<evidence type="ECO:0000303" key="17">
    <source>
    </source>
</evidence>
<evidence type="ECO:0000303" key="18">
    <source>
    </source>
</evidence>
<evidence type="ECO:0000303" key="19">
    <source>
    </source>
</evidence>
<evidence type="ECO:0000305" key="20"/>